<keyword id="KW-1003">Cell membrane</keyword>
<keyword id="KW-0472">Membrane</keyword>
<keyword id="KW-0653">Protein transport</keyword>
<keyword id="KW-1185">Reference proteome</keyword>
<keyword id="KW-0812">Transmembrane</keyword>
<keyword id="KW-1133">Transmembrane helix</keyword>
<keyword id="KW-0813">Transport</keyword>
<dbReference type="EMBL" id="X99944">
    <property type="protein sequence ID" value="CAA68200.1"/>
    <property type="molecule type" value="Genomic_DNA"/>
</dbReference>
<dbReference type="EMBL" id="AE006468">
    <property type="protein sequence ID" value="AAL20344.1"/>
    <property type="molecule type" value="Genomic_DNA"/>
</dbReference>
<dbReference type="RefSeq" id="NP_460385.1">
    <property type="nucleotide sequence ID" value="NC_003197.2"/>
</dbReference>
<dbReference type="RefSeq" id="WP_000999982.1">
    <property type="nucleotide sequence ID" value="NC_003197.2"/>
</dbReference>
<dbReference type="SMR" id="P74891"/>
<dbReference type="STRING" id="99287.STM1420"/>
<dbReference type="PaxDb" id="99287-STM1420"/>
<dbReference type="GeneID" id="1252938"/>
<dbReference type="KEGG" id="stm:STM1420"/>
<dbReference type="PATRIC" id="fig|99287.12.peg.1504"/>
<dbReference type="HOGENOM" id="CLU_164516_1_1_6"/>
<dbReference type="OMA" id="FKQGMFL"/>
<dbReference type="PhylomeDB" id="P74891"/>
<dbReference type="BioCyc" id="SENT99287:STM1420-MONOMER"/>
<dbReference type="Proteomes" id="UP000001014">
    <property type="component" value="Chromosome"/>
</dbReference>
<dbReference type="GO" id="GO:0005886">
    <property type="term" value="C:plasma membrane"/>
    <property type="evidence" value="ECO:0007669"/>
    <property type="project" value="UniProtKB-SubCell"/>
</dbReference>
<dbReference type="GO" id="GO:0044780">
    <property type="term" value="P:bacterial-type flagellum assembly"/>
    <property type="evidence" value="ECO:0000318"/>
    <property type="project" value="GO_Central"/>
</dbReference>
<dbReference type="GO" id="GO:0009306">
    <property type="term" value="P:protein secretion"/>
    <property type="evidence" value="ECO:0007669"/>
    <property type="project" value="InterPro"/>
</dbReference>
<dbReference type="InterPro" id="IPR002191">
    <property type="entry name" value="Bac_export_3"/>
</dbReference>
<dbReference type="InterPro" id="IPR006306">
    <property type="entry name" value="T3SS_HrpO"/>
</dbReference>
<dbReference type="NCBIfam" id="TIGR01403">
    <property type="entry name" value="fliQ_rel_III"/>
    <property type="match status" value="1"/>
</dbReference>
<dbReference type="NCBIfam" id="NF011877">
    <property type="entry name" value="PRK15350.1"/>
    <property type="match status" value="1"/>
</dbReference>
<dbReference type="PANTHER" id="PTHR34040">
    <property type="entry name" value="FLAGELLAR BIOSYNTHETIC PROTEIN FLIQ"/>
    <property type="match status" value="1"/>
</dbReference>
<dbReference type="PANTHER" id="PTHR34040:SF4">
    <property type="entry name" value="SECRETION SYSTEM APPARATUS PROTEIN SSAS"/>
    <property type="match status" value="1"/>
</dbReference>
<dbReference type="Pfam" id="PF01313">
    <property type="entry name" value="Bac_export_3"/>
    <property type="match status" value="1"/>
</dbReference>
<dbReference type="PIRSF" id="PIRSF004669">
    <property type="entry name" value="FliQ"/>
    <property type="match status" value="1"/>
</dbReference>
<dbReference type="PRINTS" id="PR00952">
    <property type="entry name" value="TYPE3IMQPROT"/>
</dbReference>
<proteinExistence type="inferred from homology"/>
<sequence>MNDSELTQFVTQLLWIVLFTSMPVVLVASVVGVIVSLVQALTQIQDQTLQFMIKLLAIAITLMVSYPWLSGILLNYTRQIMLRIGEHG</sequence>
<gene>
    <name type="primary">ssaS</name>
    <name type="ordered locus">STM1420</name>
</gene>
<accession>P74891</accession>
<feature type="chain" id="PRO_0000129112" description="Secretion system apparatus protein SsaS">
    <location>
        <begin position="1"/>
        <end position="88"/>
    </location>
</feature>
<feature type="transmembrane region" description="Helical" evidence="1">
    <location>
        <begin position="15"/>
        <end position="35"/>
    </location>
</feature>
<feature type="transmembrane region" description="Helical" evidence="1">
    <location>
        <begin position="55"/>
        <end position="75"/>
    </location>
</feature>
<organism>
    <name type="scientific">Salmonella typhimurium (strain LT2 / SGSC1412 / ATCC 700720)</name>
    <dbReference type="NCBI Taxonomy" id="99287"/>
    <lineage>
        <taxon>Bacteria</taxon>
        <taxon>Pseudomonadati</taxon>
        <taxon>Pseudomonadota</taxon>
        <taxon>Gammaproteobacteria</taxon>
        <taxon>Enterobacterales</taxon>
        <taxon>Enterobacteriaceae</taxon>
        <taxon>Salmonella</taxon>
    </lineage>
</organism>
<reference key="1">
    <citation type="journal article" date="1997" name="J. Bacteriol.">
        <title>Analysis of the boundaries of Salmonella pathogenicity island 2 and the corresponding chromosomal region of Escherichia coli K-12.</title>
        <authorList>
            <person name="Hensel M."/>
            <person name="Shea J.E."/>
            <person name="Baeumler A.J."/>
            <person name="Gleeson C."/>
            <person name="Blattner F.R."/>
            <person name="Holden D.W."/>
        </authorList>
    </citation>
    <scope>NUCLEOTIDE SEQUENCE [GENOMIC DNA]</scope>
    <source>
        <strain>LT2</strain>
    </source>
</reference>
<reference key="2">
    <citation type="journal article" date="2001" name="Nature">
        <title>Complete genome sequence of Salmonella enterica serovar Typhimurium LT2.</title>
        <authorList>
            <person name="McClelland M."/>
            <person name="Sanderson K.E."/>
            <person name="Spieth J."/>
            <person name="Clifton S.W."/>
            <person name="Latreille P."/>
            <person name="Courtney L."/>
            <person name="Porwollik S."/>
            <person name="Ali J."/>
            <person name="Dante M."/>
            <person name="Du F."/>
            <person name="Hou S."/>
            <person name="Layman D."/>
            <person name="Leonard S."/>
            <person name="Nguyen C."/>
            <person name="Scott K."/>
            <person name="Holmes A."/>
            <person name="Grewal N."/>
            <person name="Mulvaney E."/>
            <person name="Ryan E."/>
            <person name="Sun H."/>
            <person name="Florea L."/>
            <person name="Miller W."/>
            <person name="Stoneking T."/>
            <person name="Nhan M."/>
            <person name="Waterston R."/>
            <person name="Wilson R.K."/>
        </authorList>
    </citation>
    <scope>NUCLEOTIDE SEQUENCE [LARGE SCALE GENOMIC DNA]</scope>
    <source>
        <strain>LT2 / SGSC1412 / ATCC 700720</strain>
    </source>
</reference>
<comment type="function">
    <text>Part of a type III secretion system.</text>
</comment>
<comment type="subcellular location">
    <subcellularLocation>
        <location evidence="2">Cell membrane</location>
        <topology evidence="2">Multi-pass membrane protein</topology>
    </subcellularLocation>
</comment>
<comment type="similarity">
    <text evidence="2">Belongs to the FliQ/MopD/SpaQ family.</text>
</comment>
<evidence type="ECO:0000255" key="1"/>
<evidence type="ECO:0000305" key="2"/>
<protein>
    <recommendedName>
        <fullName>Secretion system apparatus protein SsaS</fullName>
    </recommendedName>
</protein>
<name>SSAS_SALTY</name>